<feature type="chain" id="PRO_1000132443" description="Glycine dehydrogenase (decarboxylating)">
    <location>
        <begin position="1"/>
        <end position="957"/>
    </location>
</feature>
<feature type="modified residue" description="N6-(pyridoxal phosphate)lysine" evidence="1">
    <location>
        <position position="708"/>
    </location>
</feature>
<proteinExistence type="inferred from homology"/>
<sequence>MTQTLSQLENRDAFIERHIGPDAQQQQEMLKTVGADSLNALIGQIVPQDIQLATPPQVGDATTEFAALAELKAIAGRNKRFKSYIGMGYTAVQLPPVIQRNMLENPGWYTAYTPYQPEVSQGRLESLLNFQQVTLDLTGLDIASASLLDEATAAAEAMAMAKRVSKLKNANRFFVAADVHPQTLDVVRTRAETFGFDVIVDDADKVLDHQDVFGVLLQQVGTTGEIHDYSKLIAELKARKVIVSVAADFMALVLLTAPGKQGADIVFGSAQRFGVPMGYGGPHAAFFAAKDEFKRSMPGRIIGVSKDAAGNTALRMAMQTREQHIRREKANSNICTSQVLLANIASLYAVFHGPAGLKRIAGRIHRLTDILADGLQKKGLKLRHAHYFDTLCVEVADKAAVLARAEALQINLRSDIHGAVGITLDEATTREDVLNLFRAIVGDDHGLDIDTLDKDVALDSRSIPAAMLRDDAILTHPVFNRYHSETEMMRYMHALERKDLALNQAMIPLGSCTMKLNAAAEMIPITWPEFAELHPFCPVEQAEGYHQMIAQLSDWLVKLTGYDAVCMQPNSGAQGEYAGLLAIRHYHESRNEGHRDICLIPSSAHGTNPASAQMAGMQVVVVACDKNGNIDLADLREKAEQAGANLSCIMVTYPSTHGVYEETIREVCEIVHQFGGQVYLDGANMNAQVGITSPGFIGADVSHLNLHKTFCIPHGGGGPGMGPIGVKAHLAPFVPGHSVVQIEGMLTRQGAVSAAPFGSASILPISWMYIRMMGAEGLKQASQNAILNANYIATRLKEAYPVLYTGRDGRVAHECILDIRPLKEETGISELDIAKRLIDFGFHAPTMSFPVAGTLMVEPTESESKVELDRFIDAMLAIRAEIDRVKAGEWPLEDNPLVNAPHTQGELVSEWNHPYSRELAVFPAGLHNKYWPTVKRLDDVYGDRNLFCSCVPMSEYQ</sequence>
<dbReference type="EC" id="1.4.4.2" evidence="1"/>
<dbReference type="EMBL" id="CP000964">
    <property type="protein sequence ID" value="ACI06995.1"/>
    <property type="molecule type" value="Genomic_DNA"/>
</dbReference>
<dbReference type="SMR" id="B5XUD5"/>
<dbReference type="KEGG" id="kpe:KPK_0761"/>
<dbReference type="HOGENOM" id="CLU_004620_1_1_6"/>
<dbReference type="Proteomes" id="UP000001734">
    <property type="component" value="Chromosome"/>
</dbReference>
<dbReference type="GO" id="GO:0005829">
    <property type="term" value="C:cytosol"/>
    <property type="evidence" value="ECO:0007669"/>
    <property type="project" value="TreeGrafter"/>
</dbReference>
<dbReference type="GO" id="GO:0005960">
    <property type="term" value="C:glycine cleavage complex"/>
    <property type="evidence" value="ECO:0007669"/>
    <property type="project" value="TreeGrafter"/>
</dbReference>
<dbReference type="GO" id="GO:0016594">
    <property type="term" value="F:glycine binding"/>
    <property type="evidence" value="ECO:0007669"/>
    <property type="project" value="TreeGrafter"/>
</dbReference>
<dbReference type="GO" id="GO:0004375">
    <property type="term" value="F:glycine dehydrogenase (decarboxylating) activity"/>
    <property type="evidence" value="ECO:0007669"/>
    <property type="project" value="UniProtKB-EC"/>
</dbReference>
<dbReference type="GO" id="GO:0030170">
    <property type="term" value="F:pyridoxal phosphate binding"/>
    <property type="evidence" value="ECO:0007669"/>
    <property type="project" value="TreeGrafter"/>
</dbReference>
<dbReference type="GO" id="GO:0019464">
    <property type="term" value="P:glycine decarboxylation via glycine cleavage system"/>
    <property type="evidence" value="ECO:0007669"/>
    <property type="project" value="UniProtKB-UniRule"/>
</dbReference>
<dbReference type="CDD" id="cd00613">
    <property type="entry name" value="GDC-P"/>
    <property type="match status" value="2"/>
</dbReference>
<dbReference type="FunFam" id="3.40.640.10:FF:000005">
    <property type="entry name" value="Glycine dehydrogenase (decarboxylating), mitochondrial"/>
    <property type="match status" value="1"/>
</dbReference>
<dbReference type="FunFam" id="3.90.1150.10:FF:000007">
    <property type="entry name" value="Glycine dehydrogenase (decarboxylating), mitochondrial"/>
    <property type="match status" value="1"/>
</dbReference>
<dbReference type="FunFam" id="3.40.640.10:FF:000007">
    <property type="entry name" value="glycine dehydrogenase (Decarboxylating), mitochondrial"/>
    <property type="match status" value="1"/>
</dbReference>
<dbReference type="Gene3D" id="3.90.1150.10">
    <property type="entry name" value="Aspartate Aminotransferase, domain 1"/>
    <property type="match status" value="1"/>
</dbReference>
<dbReference type="Gene3D" id="3.40.640.10">
    <property type="entry name" value="Type I PLP-dependent aspartate aminotransferase-like (Major domain)"/>
    <property type="match status" value="2"/>
</dbReference>
<dbReference type="HAMAP" id="MF_00711">
    <property type="entry name" value="GcvP"/>
    <property type="match status" value="1"/>
</dbReference>
<dbReference type="InterPro" id="IPR003437">
    <property type="entry name" value="GcvP"/>
</dbReference>
<dbReference type="InterPro" id="IPR049316">
    <property type="entry name" value="GDC-P_C"/>
</dbReference>
<dbReference type="InterPro" id="IPR049315">
    <property type="entry name" value="GDC-P_N"/>
</dbReference>
<dbReference type="InterPro" id="IPR020581">
    <property type="entry name" value="GDC_P"/>
</dbReference>
<dbReference type="InterPro" id="IPR015424">
    <property type="entry name" value="PyrdxlP-dep_Trfase"/>
</dbReference>
<dbReference type="InterPro" id="IPR015421">
    <property type="entry name" value="PyrdxlP-dep_Trfase_major"/>
</dbReference>
<dbReference type="InterPro" id="IPR015422">
    <property type="entry name" value="PyrdxlP-dep_Trfase_small"/>
</dbReference>
<dbReference type="NCBIfam" id="TIGR00461">
    <property type="entry name" value="gcvP"/>
    <property type="match status" value="1"/>
</dbReference>
<dbReference type="NCBIfam" id="NF003346">
    <property type="entry name" value="PRK04366.1"/>
    <property type="match status" value="1"/>
</dbReference>
<dbReference type="PANTHER" id="PTHR11773:SF13">
    <property type="entry name" value="GLYCINE DEHYDROGENASE (DECARBOXYLATING)"/>
    <property type="match status" value="1"/>
</dbReference>
<dbReference type="PANTHER" id="PTHR11773">
    <property type="entry name" value="GLYCINE DEHYDROGENASE, DECARBOXYLATING"/>
    <property type="match status" value="1"/>
</dbReference>
<dbReference type="Pfam" id="PF21478">
    <property type="entry name" value="GcvP2_C"/>
    <property type="match status" value="1"/>
</dbReference>
<dbReference type="Pfam" id="PF02347">
    <property type="entry name" value="GDC-P"/>
    <property type="match status" value="2"/>
</dbReference>
<dbReference type="SUPFAM" id="SSF53383">
    <property type="entry name" value="PLP-dependent transferases"/>
    <property type="match status" value="2"/>
</dbReference>
<accession>B5XUD5</accession>
<comment type="function">
    <text evidence="1">The glycine cleavage system catalyzes the degradation of glycine. The P protein binds the alpha-amino group of glycine through its pyridoxal phosphate cofactor; CO(2) is released and the remaining methylamine moiety is then transferred to the lipoamide cofactor of the H protein.</text>
</comment>
<comment type="catalytic activity">
    <reaction evidence="1">
        <text>N(6)-[(R)-lipoyl]-L-lysyl-[glycine-cleavage complex H protein] + glycine + H(+) = N(6)-[(R)-S(8)-aminomethyldihydrolipoyl]-L-lysyl-[glycine-cleavage complex H protein] + CO2</text>
        <dbReference type="Rhea" id="RHEA:24304"/>
        <dbReference type="Rhea" id="RHEA-COMP:10494"/>
        <dbReference type="Rhea" id="RHEA-COMP:10495"/>
        <dbReference type="ChEBI" id="CHEBI:15378"/>
        <dbReference type="ChEBI" id="CHEBI:16526"/>
        <dbReference type="ChEBI" id="CHEBI:57305"/>
        <dbReference type="ChEBI" id="CHEBI:83099"/>
        <dbReference type="ChEBI" id="CHEBI:83143"/>
        <dbReference type="EC" id="1.4.4.2"/>
    </reaction>
</comment>
<comment type="cofactor">
    <cofactor evidence="1">
        <name>pyridoxal 5'-phosphate</name>
        <dbReference type="ChEBI" id="CHEBI:597326"/>
    </cofactor>
</comment>
<comment type="subunit">
    <text evidence="1">The glycine cleavage system is composed of four proteins: P, T, L and H.</text>
</comment>
<comment type="similarity">
    <text evidence="1">Belongs to the GcvP family.</text>
</comment>
<organism>
    <name type="scientific">Klebsiella pneumoniae (strain 342)</name>
    <dbReference type="NCBI Taxonomy" id="507522"/>
    <lineage>
        <taxon>Bacteria</taxon>
        <taxon>Pseudomonadati</taxon>
        <taxon>Pseudomonadota</taxon>
        <taxon>Gammaproteobacteria</taxon>
        <taxon>Enterobacterales</taxon>
        <taxon>Enterobacteriaceae</taxon>
        <taxon>Klebsiella/Raoultella group</taxon>
        <taxon>Klebsiella</taxon>
        <taxon>Klebsiella pneumoniae complex</taxon>
    </lineage>
</organism>
<protein>
    <recommendedName>
        <fullName evidence="1">Glycine dehydrogenase (decarboxylating)</fullName>
        <ecNumber evidence="1">1.4.4.2</ecNumber>
    </recommendedName>
    <alternativeName>
        <fullName evidence="1">Glycine cleavage system P-protein</fullName>
    </alternativeName>
    <alternativeName>
        <fullName evidence="1">Glycine decarboxylase</fullName>
    </alternativeName>
    <alternativeName>
        <fullName evidence="1">Glycine dehydrogenase (aminomethyl-transferring)</fullName>
    </alternativeName>
</protein>
<keyword id="KW-0560">Oxidoreductase</keyword>
<keyword id="KW-0663">Pyridoxal phosphate</keyword>
<gene>
    <name evidence="1" type="primary">gcvP</name>
    <name type="ordered locus">KPK_0761</name>
</gene>
<evidence type="ECO:0000255" key="1">
    <source>
        <dbReference type="HAMAP-Rule" id="MF_00711"/>
    </source>
</evidence>
<reference key="1">
    <citation type="journal article" date="2008" name="PLoS Genet.">
        <title>Complete genome sequence of the N2-fixing broad host range endophyte Klebsiella pneumoniae 342 and virulence predictions verified in mice.</title>
        <authorList>
            <person name="Fouts D.E."/>
            <person name="Tyler H.L."/>
            <person name="DeBoy R.T."/>
            <person name="Daugherty S."/>
            <person name="Ren Q."/>
            <person name="Badger J.H."/>
            <person name="Durkin A.S."/>
            <person name="Huot H."/>
            <person name="Shrivastava S."/>
            <person name="Kothari S."/>
            <person name="Dodson R.J."/>
            <person name="Mohamoud Y."/>
            <person name="Khouri H."/>
            <person name="Roesch L.F.W."/>
            <person name="Krogfelt K.A."/>
            <person name="Struve C."/>
            <person name="Triplett E.W."/>
            <person name="Methe B.A."/>
        </authorList>
    </citation>
    <scope>NUCLEOTIDE SEQUENCE [LARGE SCALE GENOMIC DNA]</scope>
    <source>
        <strain>342</strain>
    </source>
</reference>
<name>GCSP_KLEP3</name>